<keyword id="KW-0025">Alternative splicing</keyword>
<keyword id="KW-1262">Eukaryotic host gene expression shutoff by virus</keyword>
<keyword id="KW-1035">Host cytoplasm</keyword>
<keyword id="KW-1190">Host gene expression shutoff by virus</keyword>
<keyword id="KW-1192">Host mRNA suppression by virus</keyword>
<keyword id="KW-1048">Host nucleus</keyword>
<keyword id="KW-0945">Host-virus interaction</keyword>
<keyword id="KW-1090">Inhibition of host innate immune response by virus</keyword>
<keyword id="KW-1114">Inhibition of host interferon signaling pathway by virus</keyword>
<keyword id="KW-1102">Inhibition of host PKR by virus</keyword>
<keyword id="KW-1103">Inhibition of host pre-mRNA processing by virus</keyword>
<keyword id="KW-1088">Inhibition of host RIG-I by virus</keyword>
<keyword id="KW-1113">Inhibition of host RLR pathway by virus</keyword>
<keyword id="KW-0922">Interferon antiviral system evasion</keyword>
<keyword id="KW-0694">RNA-binding</keyword>
<keyword id="KW-0832">Ubl conjugation</keyword>
<keyword id="KW-0899">Viral immunoevasion</keyword>
<proteinExistence type="inferred from homology"/>
<reference key="1">
    <citation type="journal article" date="1983" name="J. Virol.">
        <title>Sequential mutations in the NS genes of influenza virus field strains.</title>
        <authorList>
            <person name="Krystal M."/>
            <person name="Buonagurio D.A."/>
            <person name="Young J.F."/>
            <person name="Palese P."/>
        </authorList>
    </citation>
    <scope>NUCLEOTIDE SEQUENCE [GENOMIC RNA]</scope>
</reference>
<reference key="2">
    <citation type="journal article" date="2003" name="Virology">
        <title>Intracellular warfare between human influenza viruses and human cells: the roles of the viral NS1 protein.</title>
        <authorList>
            <person name="Krug R.M."/>
            <person name="Yuan W."/>
            <person name="Noah D.L."/>
            <person name="Latham A.G."/>
        </authorList>
    </citation>
    <scope>REVIEW</scope>
</reference>
<organism>
    <name type="scientific">Influenza A virus (strain A/USSR/90/1977 H1N1)</name>
    <dbReference type="NCBI Taxonomy" id="381516"/>
    <lineage>
        <taxon>Viruses</taxon>
        <taxon>Riboviria</taxon>
        <taxon>Orthornavirae</taxon>
        <taxon>Negarnaviricota</taxon>
        <taxon>Polyploviricotina</taxon>
        <taxon>Insthoviricetes</taxon>
        <taxon>Articulavirales</taxon>
        <taxon>Orthomyxoviridae</taxon>
        <taxon>Alphainfluenzavirus</taxon>
        <taxon>Alphainfluenzavirus influenzae</taxon>
        <taxon>Influenza A virus</taxon>
    </lineage>
</organism>
<comment type="function">
    <text evidence="1">Inhibits post-transcriptional processing of cellular pre-mRNA, by binding and inhibiting two cellular proteins that are required for the 3'-end processing of cellular pre-mRNAs: the 30 kDa cleavage and polyadenylation specificity factor/CPSF4 and the poly(A)-binding protein 2/PABPN1. In turn, unprocessed 3' end pre-mRNAs accumulate in the host nucleus and are no longer exported to the cytoplasm. Cellular protein synthesis is thereby shut off very early after virus infection. Viral protein synthesis is not affected by the inhibition of the cellular 3' end processing machinery because the poly(A) tails of viral mRNAs are produced by the viral polymerase through a stuttering mechanism. Prevents the establishment of the cellular antiviral state by inhibiting TRIM25-mediated RIGI ubiquitination, which normally triggers the antiviral transduction signal that leads to the activation of type I IFN genes by transcription factors IRF3 and IRF7. Also binds poly(A) and U6 snRNA. Inhibits the integrated stress response (ISR) in the infected cell by blocking dsRNA binding by EIF2AK2/PKR and further phosphorylation of EIF2S1/EIF-2ALPHA. Stress granule formation is thus inhibited, which allows protein synthesis and viral replication.</text>
</comment>
<comment type="subunit">
    <text evidence="1">Homodimer. Interacts with host TRIM25 (via coiled coil); this interaction specifically inhibits TRIM25 multimerization and TRIM25-mediated RIGI CARD ubiquitination. Interacts with human EIF2AK2/PKR, CPSF4, IVNS1ABP and PABPN1.</text>
</comment>
<comment type="subcellular location">
    <subcellularLocation>
        <location evidence="1">Host nucleus</location>
    </subcellularLocation>
    <subcellularLocation>
        <location evidence="1">Host cytoplasm</location>
    </subcellularLocation>
    <text evidence="1">In uninfected, transfected cells, NS1 is localized in the nucleus. Only in virus infected cells, the nuclear export signal is unveiled, presumably by a viral protein, and a fraction of NS1 is exported in the cytoplasm.</text>
</comment>
<comment type="alternative products">
    <event type="alternative splicing"/>
    <isoform>
        <id>P03498-1</id>
        <name>NS1</name>
        <sequence type="displayed"/>
    </isoform>
    <isoform>
        <id>P03504-1</id>
        <name>NEP</name>
        <name>NS2</name>
        <sequence type="external"/>
    </isoform>
</comment>
<comment type="domain">
    <text evidence="1">The dsRNA-binding region is required for suppression of RNA silencing.</text>
</comment>
<comment type="PTM">
    <text evidence="1">Upon interferon induction, ISGylated via host HERC5; this results in the impairment of NS1 interaction with RNA targets due to its inability to form homodimers and to interact with host EIF2AK2/PKR.</text>
</comment>
<comment type="similarity">
    <text evidence="1">Belongs to the influenza A viruses NS1 family.</text>
</comment>
<name>NS1_I77AB</name>
<sequence length="237" mass="26890">MDPNTVSSFQVDCFLWHVRKQVADQELGDAPFLDRLRRDQKSLRGRGSTLGLNIETATCVGKQIVERILKEESDEALKMTMASAPASRYLTDMTIEEMSRDWFMLMPKQKVAGPLCIRMDQAIMDKNIILKANFSVIFDRLETLILLRAFTEEGAIVGEISPLPSLPGHTNEDVKNAIGVLIGGLEWNDNTVRVSKTLQRFAWRSSNENGRPPLTPKQKRKMARTIRSEVRRNKMAD</sequence>
<evidence type="ECO:0000255" key="1">
    <source>
        <dbReference type="HAMAP-Rule" id="MF_04066"/>
    </source>
</evidence>
<evidence type="ECO:0000256" key="2">
    <source>
        <dbReference type="SAM" id="MobiDB-lite"/>
    </source>
</evidence>
<feature type="chain" id="PRO_0000078953" description="Non-structural protein 1">
    <location>
        <begin position="1"/>
        <end position="237"/>
    </location>
</feature>
<feature type="region of interest" description="RNA-binding and homodimerization" evidence="1">
    <location>
        <begin position="1"/>
        <end position="73"/>
    </location>
</feature>
<feature type="region of interest" description="CPSF4-binding" evidence="1">
    <location>
        <begin position="180"/>
        <end position="215"/>
    </location>
</feature>
<feature type="region of interest" description="Disordered" evidence="2">
    <location>
        <begin position="205"/>
        <end position="237"/>
    </location>
</feature>
<feature type="region of interest" description="PABPN1-binding" evidence="1">
    <location>
        <begin position="223"/>
        <end position="230"/>
    </location>
</feature>
<feature type="short sequence motif" description="Nuclear localization signal" evidence="1">
    <location>
        <begin position="34"/>
        <end position="38"/>
    </location>
</feature>
<feature type="short sequence motif" description="Nuclear export signal" evidence="1">
    <location>
        <begin position="137"/>
        <end position="146"/>
    </location>
</feature>
<feature type="compositionally biased region" description="Basic and acidic residues" evidence="2">
    <location>
        <begin position="226"/>
        <end position="237"/>
    </location>
</feature>
<gene>
    <name evidence="1" type="primary">NS</name>
</gene>
<organismHost>
    <name type="scientific">Aves</name>
    <dbReference type="NCBI Taxonomy" id="8782"/>
</organismHost>
<organismHost>
    <name type="scientific">Homo sapiens</name>
    <name type="common">Human</name>
    <dbReference type="NCBI Taxonomy" id="9606"/>
</organismHost>
<organismHost>
    <name type="scientific">Sus scrofa</name>
    <name type="common">Pig</name>
    <dbReference type="NCBI Taxonomy" id="9823"/>
</organismHost>
<dbReference type="EMBL" id="K00578">
    <property type="protein sequence ID" value="AAA43540.1"/>
    <property type="molecule type" value="Genomic_RNA"/>
</dbReference>
<dbReference type="SMR" id="P03498"/>
<dbReference type="Proteomes" id="UP000121508">
    <property type="component" value="Genome"/>
</dbReference>
<dbReference type="GO" id="GO:0030430">
    <property type="term" value="C:host cell cytoplasm"/>
    <property type="evidence" value="ECO:0007669"/>
    <property type="project" value="UniProtKB-SubCell"/>
</dbReference>
<dbReference type="GO" id="GO:0042025">
    <property type="term" value="C:host cell nucleus"/>
    <property type="evidence" value="ECO:0007669"/>
    <property type="project" value="UniProtKB-SubCell"/>
</dbReference>
<dbReference type="GO" id="GO:0030291">
    <property type="term" value="F:protein serine/threonine kinase inhibitor activity"/>
    <property type="evidence" value="ECO:0007669"/>
    <property type="project" value="UniProtKB-KW"/>
</dbReference>
<dbReference type="GO" id="GO:0003723">
    <property type="term" value="F:RNA binding"/>
    <property type="evidence" value="ECO:0007669"/>
    <property type="project" value="UniProtKB-KW"/>
</dbReference>
<dbReference type="GO" id="GO:0039540">
    <property type="term" value="P:symbiont-mediated suppression of host cytoplasmic pattern recognition receptor signaling pathway via inhibition of RIG-I activity"/>
    <property type="evidence" value="ECO:0007669"/>
    <property type="project" value="UniProtKB-KW"/>
</dbReference>
<dbReference type="GO" id="GO:0039657">
    <property type="term" value="P:symbiont-mediated suppression of host gene expression"/>
    <property type="evidence" value="ECO:0007669"/>
    <property type="project" value="UniProtKB-KW"/>
</dbReference>
<dbReference type="GO" id="GO:0039524">
    <property type="term" value="P:symbiont-mediated suppression of host mRNA processing"/>
    <property type="evidence" value="ECO:0007669"/>
    <property type="project" value="UniProtKB-KW"/>
</dbReference>
<dbReference type="GO" id="GO:0039580">
    <property type="term" value="P:symbiont-mediated suppression of host PKR/eIFalpha signaling"/>
    <property type="evidence" value="ECO:0007669"/>
    <property type="project" value="UniProtKB-KW"/>
</dbReference>
<dbReference type="GO" id="GO:0039502">
    <property type="term" value="P:symbiont-mediated suppression of host type I interferon-mediated signaling pathway"/>
    <property type="evidence" value="ECO:0007669"/>
    <property type="project" value="UniProtKB-KW"/>
</dbReference>
<dbReference type="FunFam" id="1.10.287.10:FF:000001">
    <property type="entry name" value="Non-structural protein 1"/>
    <property type="match status" value="1"/>
</dbReference>
<dbReference type="FunFam" id="3.30.420.330:FF:000001">
    <property type="entry name" value="Non-structural protein 1"/>
    <property type="match status" value="1"/>
</dbReference>
<dbReference type="Gene3D" id="3.30.420.330">
    <property type="entry name" value="Influenza virus non-structural protein, effector domain"/>
    <property type="match status" value="1"/>
</dbReference>
<dbReference type="Gene3D" id="1.10.287.10">
    <property type="entry name" value="S15/NS1, RNA-binding"/>
    <property type="match status" value="1"/>
</dbReference>
<dbReference type="HAMAP" id="MF_04066">
    <property type="entry name" value="INFV_NS1"/>
    <property type="match status" value="1"/>
</dbReference>
<dbReference type="InterPro" id="IPR004208">
    <property type="entry name" value="NS1"/>
</dbReference>
<dbReference type="InterPro" id="IPR000256">
    <property type="entry name" value="NS1A"/>
</dbReference>
<dbReference type="InterPro" id="IPR038064">
    <property type="entry name" value="NS1A_effect_dom-like_sf"/>
</dbReference>
<dbReference type="InterPro" id="IPR009068">
    <property type="entry name" value="uS15_NS1_RNA-bd_sf"/>
</dbReference>
<dbReference type="Pfam" id="PF00600">
    <property type="entry name" value="Flu_NS1"/>
    <property type="match status" value="1"/>
</dbReference>
<dbReference type="SUPFAM" id="SSF143021">
    <property type="entry name" value="Ns1 effector domain-like"/>
    <property type="match status" value="1"/>
</dbReference>
<dbReference type="SUPFAM" id="SSF47060">
    <property type="entry name" value="S15/NS1 RNA-binding domain"/>
    <property type="match status" value="1"/>
</dbReference>
<protein>
    <recommendedName>
        <fullName evidence="1">Non-structural protein 1</fullName>
        <shortName evidence="1">NS1</shortName>
    </recommendedName>
    <alternativeName>
        <fullName evidence="1">NS1A</fullName>
    </alternativeName>
</protein>
<accession>P03498</accession>